<evidence type="ECO:0000255" key="1">
    <source>
        <dbReference type="HAMAP-Rule" id="MF_00268"/>
    </source>
</evidence>
<accession>P16034</accession>
<sequence length="344" mass="36748">MDRQKALEAAVSQIERAFGKGSIMKLGGKDQVVETEVVSTRILGLDVALGIGGVPRGRIIEVYGPESSGKTTLALHIIAEAQKKGGTCAFVDAEHALDPSYARKLGALDELLISEPDAGEQALEIADTLVRPGAVDVLVVDSVAALVPRGELEGEMGDNHMGLHARLMSQALRKLTGSVSKSKTIVIFINQIRMKIGVMFGNPETTTGGNALKFYASVRMEIRRVGAIKDRDEVVGNQTRVKVVKNKLAPPFKVVDFDIMYGEGISKMGELIDLGVKANVVKKSGAWFSYNSTRIGQGRENAKQFLRDNPAMAAEIEGAIRQNAGLISEALAAVPDLDGTPVAE</sequence>
<name>RECA_PARME</name>
<reference key="1">
    <citation type="journal article" date="1990" name="Nucleic Acids Res.">
        <title>Nucleotide sequence of recA gene of Aquaspirillum magnetotacticum.</title>
        <authorList>
            <person name="Berson A.E."/>
            <person name="Peters M.R."/>
            <person name="Waleh N.S."/>
        </authorList>
    </citation>
    <scope>NUCLEOTIDE SEQUENCE [GENOMIC DNA]</scope>
    <source>
        <strain>ATCC 31632 / DSM 3856 / JCM 21281 / NBRC 15272 / NCIMB 12542 / MS-1</strain>
    </source>
</reference>
<keyword id="KW-0067">ATP-binding</keyword>
<keyword id="KW-0963">Cytoplasm</keyword>
<keyword id="KW-0227">DNA damage</keyword>
<keyword id="KW-0233">DNA recombination</keyword>
<keyword id="KW-0234">DNA repair</keyword>
<keyword id="KW-0238">DNA-binding</keyword>
<keyword id="KW-0547">Nucleotide-binding</keyword>
<keyword id="KW-0742">SOS response</keyword>
<organism>
    <name type="scientific">Paramagnetospirillum magnetotacticum</name>
    <name type="common">Aquaspirillum magnetotacticum</name>
    <dbReference type="NCBI Taxonomy" id="188"/>
    <lineage>
        <taxon>Bacteria</taxon>
        <taxon>Pseudomonadati</taxon>
        <taxon>Pseudomonadota</taxon>
        <taxon>Alphaproteobacteria</taxon>
        <taxon>Rhodospirillales</taxon>
        <taxon>Magnetospirillaceae</taxon>
        <taxon>Paramagnetospirillum</taxon>
    </lineage>
</organism>
<dbReference type="EMBL" id="X17371">
    <property type="protein sequence ID" value="CAA35243.1"/>
    <property type="molecule type" value="Genomic_DNA"/>
</dbReference>
<dbReference type="PIR" id="S08222">
    <property type="entry name" value="S08222"/>
</dbReference>
<dbReference type="SMR" id="P16034"/>
<dbReference type="GO" id="GO:0005829">
    <property type="term" value="C:cytosol"/>
    <property type="evidence" value="ECO:0007669"/>
    <property type="project" value="TreeGrafter"/>
</dbReference>
<dbReference type="GO" id="GO:0005524">
    <property type="term" value="F:ATP binding"/>
    <property type="evidence" value="ECO:0007669"/>
    <property type="project" value="UniProtKB-UniRule"/>
</dbReference>
<dbReference type="GO" id="GO:0016887">
    <property type="term" value="F:ATP hydrolysis activity"/>
    <property type="evidence" value="ECO:0007669"/>
    <property type="project" value="InterPro"/>
</dbReference>
<dbReference type="GO" id="GO:0140664">
    <property type="term" value="F:ATP-dependent DNA damage sensor activity"/>
    <property type="evidence" value="ECO:0007669"/>
    <property type="project" value="InterPro"/>
</dbReference>
<dbReference type="GO" id="GO:0003684">
    <property type="term" value="F:damaged DNA binding"/>
    <property type="evidence" value="ECO:0007669"/>
    <property type="project" value="UniProtKB-UniRule"/>
</dbReference>
<dbReference type="GO" id="GO:0003697">
    <property type="term" value="F:single-stranded DNA binding"/>
    <property type="evidence" value="ECO:0007669"/>
    <property type="project" value="UniProtKB-UniRule"/>
</dbReference>
<dbReference type="GO" id="GO:0006310">
    <property type="term" value="P:DNA recombination"/>
    <property type="evidence" value="ECO:0007669"/>
    <property type="project" value="UniProtKB-UniRule"/>
</dbReference>
<dbReference type="GO" id="GO:0006281">
    <property type="term" value="P:DNA repair"/>
    <property type="evidence" value="ECO:0007669"/>
    <property type="project" value="UniProtKB-UniRule"/>
</dbReference>
<dbReference type="GO" id="GO:0009432">
    <property type="term" value="P:SOS response"/>
    <property type="evidence" value="ECO:0007669"/>
    <property type="project" value="UniProtKB-UniRule"/>
</dbReference>
<dbReference type="CDD" id="cd00983">
    <property type="entry name" value="RecA"/>
    <property type="match status" value="1"/>
</dbReference>
<dbReference type="FunFam" id="3.40.50.300:FF:000087">
    <property type="entry name" value="Recombinase RecA"/>
    <property type="match status" value="1"/>
</dbReference>
<dbReference type="Gene3D" id="3.40.50.300">
    <property type="entry name" value="P-loop containing nucleotide triphosphate hydrolases"/>
    <property type="match status" value="1"/>
</dbReference>
<dbReference type="HAMAP" id="MF_00268">
    <property type="entry name" value="RecA"/>
    <property type="match status" value="1"/>
</dbReference>
<dbReference type="InterPro" id="IPR003593">
    <property type="entry name" value="AAA+_ATPase"/>
</dbReference>
<dbReference type="InterPro" id="IPR013765">
    <property type="entry name" value="DNA_recomb/repair_RecA"/>
</dbReference>
<dbReference type="InterPro" id="IPR020584">
    <property type="entry name" value="DNA_recomb/repair_RecA_CS"/>
</dbReference>
<dbReference type="InterPro" id="IPR027417">
    <property type="entry name" value="P-loop_NTPase"/>
</dbReference>
<dbReference type="InterPro" id="IPR049261">
    <property type="entry name" value="RecA-like_C"/>
</dbReference>
<dbReference type="InterPro" id="IPR049428">
    <property type="entry name" value="RecA-like_N"/>
</dbReference>
<dbReference type="InterPro" id="IPR020588">
    <property type="entry name" value="RecA_ATP-bd"/>
</dbReference>
<dbReference type="InterPro" id="IPR023400">
    <property type="entry name" value="RecA_C_sf"/>
</dbReference>
<dbReference type="InterPro" id="IPR020587">
    <property type="entry name" value="RecA_monomer-monomer_interface"/>
</dbReference>
<dbReference type="NCBIfam" id="TIGR02012">
    <property type="entry name" value="tigrfam_recA"/>
    <property type="match status" value="1"/>
</dbReference>
<dbReference type="PANTHER" id="PTHR45900:SF1">
    <property type="entry name" value="MITOCHONDRIAL DNA REPAIR PROTEIN RECA HOMOLOG-RELATED"/>
    <property type="match status" value="1"/>
</dbReference>
<dbReference type="PANTHER" id="PTHR45900">
    <property type="entry name" value="RECA"/>
    <property type="match status" value="1"/>
</dbReference>
<dbReference type="Pfam" id="PF00154">
    <property type="entry name" value="RecA"/>
    <property type="match status" value="1"/>
</dbReference>
<dbReference type="Pfam" id="PF21096">
    <property type="entry name" value="RecA_C"/>
    <property type="match status" value="1"/>
</dbReference>
<dbReference type="PRINTS" id="PR00142">
    <property type="entry name" value="RECA"/>
</dbReference>
<dbReference type="SMART" id="SM00382">
    <property type="entry name" value="AAA"/>
    <property type="match status" value="1"/>
</dbReference>
<dbReference type="SUPFAM" id="SSF52540">
    <property type="entry name" value="P-loop containing nucleoside triphosphate hydrolases"/>
    <property type="match status" value="1"/>
</dbReference>
<dbReference type="SUPFAM" id="SSF54752">
    <property type="entry name" value="RecA protein, C-terminal domain"/>
    <property type="match status" value="1"/>
</dbReference>
<dbReference type="PROSITE" id="PS00321">
    <property type="entry name" value="RECA_1"/>
    <property type="match status" value="1"/>
</dbReference>
<dbReference type="PROSITE" id="PS50162">
    <property type="entry name" value="RECA_2"/>
    <property type="match status" value="1"/>
</dbReference>
<dbReference type="PROSITE" id="PS50163">
    <property type="entry name" value="RECA_3"/>
    <property type="match status" value="1"/>
</dbReference>
<gene>
    <name evidence="1" type="primary">recA</name>
</gene>
<proteinExistence type="inferred from homology"/>
<comment type="function">
    <text evidence="1">Can catalyze the hydrolysis of ATP in the presence of single-stranded DNA, the ATP-dependent uptake of single-stranded DNA by duplex DNA, and the ATP-dependent hybridization of homologous single-stranded DNAs. It interacts with LexA causing its activation and leading to its autocatalytic cleavage.</text>
</comment>
<comment type="subcellular location">
    <subcellularLocation>
        <location evidence="1">Cytoplasm</location>
    </subcellularLocation>
</comment>
<comment type="similarity">
    <text evidence="1">Belongs to the RecA family.</text>
</comment>
<feature type="chain" id="PRO_0000122752" description="Protein RecA">
    <location>
        <begin position="1"/>
        <end position="344"/>
    </location>
</feature>
<feature type="binding site" evidence="1">
    <location>
        <begin position="64"/>
        <end position="71"/>
    </location>
    <ligand>
        <name>ATP</name>
        <dbReference type="ChEBI" id="CHEBI:30616"/>
    </ligand>
</feature>
<protein>
    <recommendedName>
        <fullName evidence="1">Protein RecA</fullName>
    </recommendedName>
    <alternativeName>
        <fullName evidence="1">Recombinase A</fullName>
    </alternativeName>
</protein>